<protein>
    <recommendedName>
        <fullName evidence="1">Holliday junction branch migration complex subunit RuvA</fullName>
    </recommendedName>
</protein>
<keyword id="KW-0963">Cytoplasm</keyword>
<keyword id="KW-0227">DNA damage</keyword>
<keyword id="KW-0233">DNA recombination</keyword>
<keyword id="KW-0234">DNA repair</keyword>
<keyword id="KW-0238">DNA-binding</keyword>
<proteinExistence type="inferred from homology"/>
<name>RUVA_SALG2</name>
<accession>B5R8E2</accession>
<feature type="chain" id="PRO_1000090364" description="Holliday junction branch migration complex subunit RuvA">
    <location>
        <begin position="1"/>
        <end position="203"/>
    </location>
</feature>
<feature type="region of interest" description="Domain I" evidence="1">
    <location>
        <begin position="1"/>
        <end position="64"/>
    </location>
</feature>
<feature type="region of interest" description="Domain II" evidence="1">
    <location>
        <begin position="65"/>
        <end position="142"/>
    </location>
</feature>
<feature type="region of interest" description="Flexible linker" evidence="1">
    <location>
        <begin position="143"/>
        <end position="154"/>
    </location>
</feature>
<feature type="region of interest" description="Domain III" evidence="1">
    <location>
        <begin position="155"/>
        <end position="203"/>
    </location>
</feature>
<comment type="function">
    <text evidence="1">The RuvA-RuvB-RuvC complex processes Holliday junction (HJ) DNA during genetic recombination and DNA repair, while the RuvA-RuvB complex plays an important role in the rescue of blocked DNA replication forks via replication fork reversal (RFR). RuvA specifically binds to HJ cruciform DNA, conferring on it an open structure. The RuvB hexamer acts as an ATP-dependent pump, pulling dsDNA into and through the RuvAB complex. HJ branch migration allows RuvC to scan DNA until it finds its consensus sequence, where it cleaves and resolves the cruciform DNA.</text>
</comment>
<comment type="subunit">
    <text evidence="1">Homotetramer. Forms an RuvA(8)-RuvB(12)-Holliday junction (HJ) complex. HJ DNA is sandwiched between 2 RuvA tetramers; dsDNA enters through RuvA and exits via RuvB. An RuvB hexamer assembles on each DNA strand where it exits the tetramer. Each RuvB hexamer is contacted by two RuvA subunits (via domain III) on 2 adjacent RuvB subunits; this complex drives branch migration. In the full resolvosome a probable DNA-RuvA(4)-RuvB(12)-RuvC(2) complex forms which resolves the HJ.</text>
</comment>
<comment type="subcellular location">
    <subcellularLocation>
        <location evidence="1">Cytoplasm</location>
    </subcellularLocation>
</comment>
<comment type="domain">
    <text evidence="1">Has three domains with a flexible linker between the domains II and III and assumes an 'L' shape. Domain III is highly mobile and contacts RuvB.</text>
</comment>
<comment type="similarity">
    <text evidence="1">Belongs to the RuvA family.</text>
</comment>
<gene>
    <name evidence="1" type="primary">ruvA</name>
    <name type="ordered locus">SG1157</name>
</gene>
<dbReference type="EMBL" id="AM933173">
    <property type="protein sequence ID" value="CAR37038.1"/>
    <property type="molecule type" value="Genomic_DNA"/>
</dbReference>
<dbReference type="RefSeq" id="WP_000580335.1">
    <property type="nucleotide sequence ID" value="NC_011274.1"/>
</dbReference>
<dbReference type="SMR" id="B5R8E2"/>
<dbReference type="KEGG" id="seg:SG1157"/>
<dbReference type="HOGENOM" id="CLU_087936_0_0_6"/>
<dbReference type="Proteomes" id="UP000008321">
    <property type="component" value="Chromosome"/>
</dbReference>
<dbReference type="GO" id="GO:0005737">
    <property type="term" value="C:cytoplasm"/>
    <property type="evidence" value="ECO:0007669"/>
    <property type="project" value="UniProtKB-SubCell"/>
</dbReference>
<dbReference type="GO" id="GO:0009379">
    <property type="term" value="C:Holliday junction helicase complex"/>
    <property type="evidence" value="ECO:0007669"/>
    <property type="project" value="InterPro"/>
</dbReference>
<dbReference type="GO" id="GO:0048476">
    <property type="term" value="C:Holliday junction resolvase complex"/>
    <property type="evidence" value="ECO:0007669"/>
    <property type="project" value="UniProtKB-UniRule"/>
</dbReference>
<dbReference type="GO" id="GO:0005524">
    <property type="term" value="F:ATP binding"/>
    <property type="evidence" value="ECO:0007669"/>
    <property type="project" value="InterPro"/>
</dbReference>
<dbReference type="GO" id="GO:0000400">
    <property type="term" value="F:four-way junction DNA binding"/>
    <property type="evidence" value="ECO:0007669"/>
    <property type="project" value="UniProtKB-UniRule"/>
</dbReference>
<dbReference type="GO" id="GO:0009378">
    <property type="term" value="F:four-way junction helicase activity"/>
    <property type="evidence" value="ECO:0007669"/>
    <property type="project" value="InterPro"/>
</dbReference>
<dbReference type="GO" id="GO:0006310">
    <property type="term" value="P:DNA recombination"/>
    <property type="evidence" value="ECO:0007669"/>
    <property type="project" value="UniProtKB-UniRule"/>
</dbReference>
<dbReference type="GO" id="GO:0006281">
    <property type="term" value="P:DNA repair"/>
    <property type="evidence" value="ECO:0007669"/>
    <property type="project" value="UniProtKB-UniRule"/>
</dbReference>
<dbReference type="CDD" id="cd14332">
    <property type="entry name" value="UBA_RuvA_C"/>
    <property type="match status" value="1"/>
</dbReference>
<dbReference type="FunFam" id="1.10.150.20:FF:000012">
    <property type="entry name" value="Holliday junction ATP-dependent DNA helicase RuvA"/>
    <property type="match status" value="1"/>
</dbReference>
<dbReference type="FunFam" id="1.10.8.10:FF:000008">
    <property type="entry name" value="Holliday junction ATP-dependent DNA helicase RuvA"/>
    <property type="match status" value="1"/>
</dbReference>
<dbReference type="FunFam" id="2.40.50.140:FF:000083">
    <property type="entry name" value="Holliday junction ATP-dependent DNA helicase RuvA"/>
    <property type="match status" value="1"/>
</dbReference>
<dbReference type="Gene3D" id="1.10.150.20">
    <property type="entry name" value="5' to 3' exonuclease, C-terminal subdomain"/>
    <property type="match status" value="1"/>
</dbReference>
<dbReference type="Gene3D" id="1.10.8.10">
    <property type="entry name" value="DNA helicase RuvA subunit, C-terminal domain"/>
    <property type="match status" value="1"/>
</dbReference>
<dbReference type="Gene3D" id="2.40.50.140">
    <property type="entry name" value="Nucleic acid-binding proteins"/>
    <property type="match status" value="1"/>
</dbReference>
<dbReference type="HAMAP" id="MF_00031">
    <property type="entry name" value="DNA_HJ_migration_RuvA"/>
    <property type="match status" value="1"/>
</dbReference>
<dbReference type="InterPro" id="IPR013849">
    <property type="entry name" value="DNA_helicase_Holl-junc_RuvA_I"/>
</dbReference>
<dbReference type="InterPro" id="IPR003583">
    <property type="entry name" value="Hlx-hairpin-Hlx_DNA-bd_motif"/>
</dbReference>
<dbReference type="InterPro" id="IPR012340">
    <property type="entry name" value="NA-bd_OB-fold"/>
</dbReference>
<dbReference type="InterPro" id="IPR000085">
    <property type="entry name" value="RuvA"/>
</dbReference>
<dbReference type="InterPro" id="IPR010994">
    <property type="entry name" value="RuvA_2-like"/>
</dbReference>
<dbReference type="InterPro" id="IPR011114">
    <property type="entry name" value="RuvA_C"/>
</dbReference>
<dbReference type="InterPro" id="IPR036267">
    <property type="entry name" value="RuvA_C_sf"/>
</dbReference>
<dbReference type="NCBIfam" id="TIGR00084">
    <property type="entry name" value="ruvA"/>
    <property type="match status" value="1"/>
</dbReference>
<dbReference type="Pfam" id="PF14520">
    <property type="entry name" value="HHH_5"/>
    <property type="match status" value="1"/>
</dbReference>
<dbReference type="Pfam" id="PF07499">
    <property type="entry name" value="RuvA_C"/>
    <property type="match status" value="1"/>
</dbReference>
<dbReference type="Pfam" id="PF01330">
    <property type="entry name" value="RuvA_N"/>
    <property type="match status" value="1"/>
</dbReference>
<dbReference type="SMART" id="SM00278">
    <property type="entry name" value="HhH1"/>
    <property type="match status" value="2"/>
</dbReference>
<dbReference type="SUPFAM" id="SSF46929">
    <property type="entry name" value="DNA helicase RuvA subunit, C-terminal domain"/>
    <property type="match status" value="1"/>
</dbReference>
<dbReference type="SUPFAM" id="SSF50249">
    <property type="entry name" value="Nucleic acid-binding proteins"/>
    <property type="match status" value="1"/>
</dbReference>
<dbReference type="SUPFAM" id="SSF47781">
    <property type="entry name" value="RuvA domain 2-like"/>
    <property type="match status" value="1"/>
</dbReference>
<sequence>MIGRLRGIILEKQPPIVLLETGGVGYEVHMPMTCFYELPEAGQEAIVFTHFVVREDAQLLYGFNNKQERTLFKELIKTNGVGPKLALAILSGMSAQQFVNAVEREELGALVKLPGIGKKTAERLIVEMKDRFKGLHGDLFTPAVDLVLTSPASPTSEDAEQEAVAALVALGYKPQEASRMVSKIARPDASSETLIRDALRAAL</sequence>
<organism>
    <name type="scientific">Salmonella gallinarum (strain 287/91 / NCTC 13346)</name>
    <dbReference type="NCBI Taxonomy" id="550538"/>
    <lineage>
        <taxon>Bacteria</taxon>
        <taxon>Pseudomonadati</taxon>
        <taxon>Pseudomonadota</taxon>
        <taxon>Gammaproteobacteria</taxon>
        <taxon>Enterobacterales</taxon>
        <taxon>Enterobacteriaceae</taxon>
        <taxon>Salmonella</taxon>
    </lineage>
</organism>
<reference key="1">
    <citation type="journal article" date="2008" name="Genome Res.">
        <title>Comparative genome analysis of Salmonella enteritidis PT4 and Salmonella gallinarum 287/91 provides insights into evolutionary and host adaptation pathways.</title>
        <authorList>
            <person name="Thomson N.R."/>
            <person name="Clayton D.J."/>
            <person name="Windhorst D."/>
            <person name="Vernikos G."/>
            <person name="Davidson S."/>
            <person name="Churcher C."/>
            <person name="Quail M.A."/>
            <person name="Stevens M."/>
            <person name="Jones M.A."/>
            <person name="Watson M."/>
            <person name="Barron A."/>
            <person name="Layton A."/>
            <person name="Pickard D."/>
            <person name="Kingsley R.A."/>
            <person name="Bignell A."/>
            <person name="Clark L."/>
            <person name="Harris B."/>
            <person name="Ormond D."/>
            <person name="Abdellah Z."/>
            <person name="Brooks K."/>
            <person name="Cherevach I."/>
            <person name="Chillingworth T."/>
            <person name="Woodward J."/>
            <person name="Norberczak H."/>
            <person name="Lord A."/>
            <person name="Arrowsmith C."/>
            <person name="Jagels K."/>
            <person name="Moule S."/>
            <person name="Mungall K."/>
            <person name="Saunders M."/>
            <person name="Whitehead S."/>
            <person name="Chabalgoity J.A."/>
            <person name="Maskell D."/>
            <person name="Humphreys T."/>
            <person name="Roberts M."/>
            <person name="Barrow P.A."/>
            <person name="Dougan G."/>
            <person name="Parkhill J."/>
        </authorList>
    </citation>
    <scope>NUCLEOTIDE SEQUENCE [LARGE SCALE GENOMIC DNA]</scope>
    <source>
        <strain>287/91 / NCTC 13346</strain>
    </source>
</reference>
<evidence type="ECO:0000255" key="1">
    <source>
        <dbReference type="HAMAP-Rule" id="MF_00031"/>
    </source>
</evidence>